<dbReference type="EC" id="2.2.1.9" evidence="1"/>
<dbReference type="EMBL" id="CP000671">
    <property type="protein sequence ID" value="ABQ97808.1"/>
    <property type="molecule type" value="Genomic_DNA"/>
</dbReference>
<dbReference type="SMR" id="A5UAK7"/>
<dbReference type="KEGG" id="hip:CGSHiEE_01640"/>
<dbReference type="HOGENOM" id="CLU_006051_3_0_6"/>
<dbReference type="UniPathway" id="UPA00079"/>
<dbReference type="UniPathway" id="UPA01057">
    <property type="reaction ID" value="UER00164"/>
</dbReference>
<dbReference type="GO" id="GO:0070204">
    <property type="term" value="F:2-succinyl-5-enolpyruvyl-6-hydroxy-3-cyclohexene-1-carboxylic-acid synthase activity"/>
    <property type="evidence" value="ECO:0007669"/>
    <property type="project" value="UniProtKB-UniRule"/>
</dbReference>
<dbReference type="GO" id="GO:0000287">
    <property type="term" value="F:magnesium ion binding"/>
    <property type="evidence" value="ECO:0007669"/>
    <property type="project" value="UniProtKB-UniRule"/>
</dbReference>
<dbReference type="GO" id="GO:0030145">
    <property type="term" value="F:manganese ion binding"/>
    <property type="evidence" value="ECO:0007669"/>
    <property type="project" value="UniProtKB-UniRule"/>
</dbReference>
<dbReference type="GO" id="GO:0030976">
    <property type="term" value="F:thiamine pyrophosphate binding"/>
    <property type="evidence" value="ECO:0007669"/>
    <property type="project" value="UniProtKB-UniRule"/>
</dbReference>
<dbReference type="GO" id="GO:0009234">
    <property type="term" value="P:menaquinone biosynthetic process"/>
    <property type="evidence" value="ECO:0007669"/>
    <property type="project" value="UniProtKB-UniRule"/>
</dbReference>
<dbReference type="CDD" id="cd07037">
    <property type="entry name" value="TPP_PYR_MenD"/>
    <property type="match status" value="1"/>
</dbReference>
<dbReference type="CDD" id="cd02009">
    <property type="entry name" value="TPP_SHCHC_synthase"/>
    <property type="match status" value="1"/>
</dbReference>
<dbReference type="Gene3D" id="3.40.50.970">
    <property type="match status" value="2"/>
</dbReference>
<dbReference type="Gene3D" id="3.40.50.1220">
    <property type="entry name" value="TPP-binding domain"/>
    <property type="match status" value="1"/>
</dbReference>
<dbReference type="HAMAP" id="MF_01659">
    <property type="entry name" value="MenD"/>
    <property type="match status" value="1"/>
</dbReference>
<dbReference type="InterPro" id="IPR004433">
    <property type="entry name" value="MenaQ_synth_MenD"/>
</dbReference>
<dbReference type="InterPro" id="IPR032264">
    <property type="entry name" value="MenD_middle"/>
</dbReference>
<dbReference type="InterPro" id="IPR029061">
    <property type="entry name" value="THDP-binding"/>
</dbReference>
<dbReference type="InterPro" id="IPR012001">
    <property type="entry name" value="Thiamin_PyroP_enz_TPP-bd_dom"/>
</dbReference>
<dbReference type="InterPro" id="IPR011766">
    <property type="entry name" value="TPP_enzyme_TPP-bd"/>
</dbReference>
<dbReference type="NCBIfam" id="TIGR00173">
    <property type="entry name" value="menD"/>
    <property type="match status" value="1"/>
</dbReference>
<dbReference type="PANTHER" id="PTHR42916">
    <property type="entry name" value="2-SUCCINYL-5-ENOLPYRUVYL-6-HYDROXY-3-CYCLOHEXENE-1-CARBOXYLATE SYNTHASE"/>
    <property type="match status" value="1"/>
</dbReference>
<dbReference type="PANTHER" id="PTHR42916:SF1">
    <property type="entry name" value="PROTEIN PHYLLO, CHLOROPLASTIC"/>
    <property type="match status" value="1"/>
</dbReference>
<dbReference type="Pfam" id="PF02775">
    <property type="entry name" value="TPP_enzyme_C"/>
    <property type="match status" value="1"/>
</dbReference>
<dbReference type="Pfam" id="PF16582">
    <property type="entry name" value="TPP_enzyme_M_2"/>
    <property type="match status" value="1"/>
</dbReference>
<dbReference type="Pfam" id="PF02776">
    <property type="entry name" value="TPP_enzyme_N"/>
    <property type="match status" value="1"/>
</dbReference>
<dbReference type="PIRSF" id="PIRSF004983">
    <property type="entry name" value="MenD"/>
    <property type="match status" value="1"/>
</dbReference>
<dbReference type="SUPFAM" id="SSF52518">
    <property type="entry name" value="Thiamin diphosphate-binding fold (THDP-binding)"/>
    <property type="match status" value="2"/>
</dbReference>
<reference key="1">
    <citation type="journal article" date="2007" name="Genome Biol.">
        <title>Characterization and modeling of the Haemophilus influenzae core and supragenomes based on the complete genomic sequences of Rd and 12 clinical nontypeable strains.</title>
        <authorList>
            <person name="Hogg J.S."/>
            <person name="Hu F.Z."/>
            <person name="Janto B."/>
            <person name="Boissy R."/>
            <person name="Hayes J."/>
            <person name="Keefe R."/>
            <person name="Post J.C."/>
            <person name="Ehrlich G.D."/>
        </authorList>
    </citation>
    <scope>NUCLEOTIDE SEQUENCE [LARGE SCALE GENOMIC DNA]</scope>
    <source>
        <strain>PittEE</strain>
    </source>
</reference>
<sequence length="568" mass="63077">MSVSVFNRCWSKVILETLVRQGVSHVCIAPGSRSTPLTLEAVRLQNAGSVTCYTHFDERGLGFFALGIAKATQSPVAIIVTSGTATANLYPAIIEARQTGVNLFVLTADRPPELWECGANQAILQQNMFGQYPVANVNLPKPKADYSAQWLISLLEQAAFQQKQQGGVVHINVPFSEPLYDATDEAVDSHSWLQPLQRWLIQTKPWMNVEAQQNEVLMHENWDHWRTKRGVVVVGQLPAEQAMGINSWASAMGWVLLTDIQSGVVPTTPYEDIWLANQTVREKLLQADIVIQFGARFISKRINQFLQAFKGEFWLVEQSGKALDPYHHSLTRFNAKAHHWLRAHPPLRQKPWLLEPLALSKFCATFIEQQVGGNLTEASFALRLPTLLPYNGVLFLGNSLLVRLVDALTQLPESYPVYTNRGASGIDGLLATAAGIGIGSNKPVVAVIGDTSTLYDLNSFALFKNVTQPTVIFVINNNGGAIFDMLPVDEQVKDQFYRLPHNGDFSQIAAMFDLKYAHPYTWADLNSVVKQAYSRRKATLIEIKTNPSDGSSLYKRLIEQISHAVIGA</sequence>
<gene>
    <name evidence="1" type="primary">menD</name>
    <name type="ordered locus">CGSHiEE_01640</name>
</gene>
<proteinExistence type="inferred from homology"/>
<keyword id="KW-0460">Magnesium</keyword>
<keyword id="KW-0464">Manganese</keyword>
<keyword id="KW-0474">Menaquinone biosynthesis</keyword>
<keyword id="KW-0479">Metal-binding</keyword>
<keyword id="KW-0786">Thiamine pyrophosphate</keyword>
<keyword id="KW-0808">Transferase</keyword>
<feature type="chain" id="PRO_0000341754" description="2-succinyl-5-enolpyruvyl-6-hydroxy-3-cyclohexene-1-carboxylate synthase">
    <location>
        <begin position="1"/>
        <end position="568"/>
    </location>
</feature>
<comment type="function">
    <text evidence="1">Catalyzes the thiamine diphosphate-dependent decarboxylation of 2-oxoglutarate and the subsequent addition of the resulting succinic semialdehyde-thiamine pyrophosphate anion to isochorismate to yield 2-succinyl-5-enolpyruvyl-6-hydroxy-3-cyclohexene-1-carboxylate (SEPHCHC).</text>
</comment>
<comment type="catalytic activity">
    <reaction evidence="1">
        <text>isochorismate + 2-oxoglutarate + H(+) = 5-enolpyruvoyl-6-hydroxy-2-succinyl-cyclohex-3-ene-1-carboxylate + CO2</text>
        <dbReference type="Rhea" id="RHEA:25593"/>
        <dbReference type="ChEBI" id="CHEBI:15378"/>
        <dbReference type="ChEBI" id="CHEBI:16526"/>
        <dbReference type="ChEBI" id="CHEBI:16810"/>
        <dbReference type="ChEBI" id="CHEBI:29780"/>
        <dbReference type="ChEBI" id="CHEBI:58818"/>
        <dbReference type="EC" id="2.2.1.9"/>
    </reaction>
</comment>
<comment type="cofactor">
    <cofactor evidence="1">
        <name>Mg(2+)</name>
        <dbReference type="ChEBI" id="CHEBI:18420"/>
    </cofactor>
    <cofactor evidence="1">
        <name>Mn(2+)</name>
        <dbReference type="ChEBI" id="CHEBI:29035"/>
    </cofactor>
</comment>
<comment type="cofactor">
    <cofactor evidence="1">
        <name>thiamine diphosphate</name>
        <dbReference type="ChEBI" id="CHEBI:58937"/>
    </cofactor>
    <text evidence="1">Binds 1 thiamine pyrophosphate per subunit.</text>
</comment>
<comment type="pathway">
    <text evidence="1">Quinol/quinone metabolism; 1,4-dihydroxy-2-naphthoate biosynthesis; 1,4-dihydroxy-2-naphthoate from chorismate: step 2/7.</text>
</comment>
<comment type="pathway">
    <text evidence="1">Quinol/quinone metabolism; menaquinone biosynthesis.</text>
</comment>
<comment type="subunit">
    <text evidence="1">Homodimer.</text>
</comment>
<comment type="similarity">
    <text evidence="1">Belongs to the TPP enzyme family. MenD subfamily.</text>
</comment>
<organism>
    <name type="scientific">Haemophilus influenzae (strain PittEE)</name>
    <dbReference type="NCBI Taxonomy" id="374930"/>
    <lineage>
        <taxon>Bacteria</taxon>
        <taxon>Pseudomonadati</taxon>
        <taxon>Pseudomonadota</taxon>
        <taxon>Gammaproteobacteria</taxon>
        <taxon>Pasteurellales</taxon>
        <taxon>Pasteurellaceae</taxon>
        <taxon>Haemophilus</taxon>
    </lineage>
</organism>
<protein>
    <recommendedName>
        <fullName evidence="1">2-succinyl-5-enolpyruvyl-6-hydroxy-3-cyclohexene-1-carboxylate synthase</fullName>
        <shortName evidence="1">SEPHCHC synthase</shortName>
        <ecNumber evidence="1">2.2.1.9</ecNumber>
    </recommendedName>
    <alternativeName>
        <fullName evidence="1">Menaquinone biosynthesis protein MenD</fullName>
    </alternativeName>
</protein>
<accession>A5UAK7</accession>
<evidence type="ECO:0000255" key="1">
    <source>
        <dbReference type="HAMAP-Rule" id="MF_01659"/>
    </source>
</evidence>
<name>MEND_HAEIE</name>